<gene>
    <name type="primary">ix</name>
    <name type="synonym">MED29</name>
    <name type="ORF">AAEL010217</name>
</gene>
<evidence type="ECO:0000250" key="1"/>
<evidence type="ECO:0000256" key="2">
    <source>
        <dbReference type="SAM" id="MobiDB-lite"/>
    </source>
</evidence>
<evidence type="ECO:0000305" key="3"/>
<reference key="1">
    <citation type="journal article" date="2007" name="Science">
        <title>Genome sequence of Aedes aegypti, a major arbovirus vector.</title>
        <authorList>
            <person name="Nene V."/>
            <person name="Wortman J.R."/>
            <person name="Lawson D."/>
            <person name="Haas B.J."/>
            <person name="Kodira C.D."/>
            <person name="Tu Z.J."/>
            <person name="Loftus B.J."/>
            <person name="Xi Z."/>
            <person name="Megy K."/>
            <person name="Grabherr M."/>
            <person name="Ren Q."/>
            <person name="Zdobnov E.M."/>
            <person name="Lobo N.F."/>
            <person name="Campbell K.S."/>
            <person name="Brown S.E."/>
            <person name="Bonaldo M.F."/>
            <person name="Zhu J."/>
            <person name="Sinkins S.P."/>
            <person name="Hogenkamp D.G."/>
            <person name="Amedeo P."/>
            <person name="Arensburger P."/>
            <person name="Atkinson P.W."/>
            <person name="Bidwell S.L."/>
            <person name="Biedler J."/>
            <person name="Birney E."/>
            <person name="Bruggner R.V."/>
            <person name="Costas J."/>
            <person name="Coy M.R."/>
            <person name="Crabtree J."/>
            <person name="Crawford M."/>
            <person name="DeBruyn B."/>
            <person name="DeCaprio D."/>
            <person name="Eiglmeier K."/>
            <person name="Eisenstadt E."/>
            <person name="El-Dorry H."/>
            <person name="Gelbart W.M."/>
            <person name="Gomes S.L."/>
            <person name="Hammond M."/>
            <person name="Hannick L.I."/>
            <person name="Hogan J.R."/>
            <person name="Holmes M.H."/>
            <person name="Jaffe D."/>
            <person name="Johnston S.J."/>
            <person name="Kennedy R.C."/>
            <person name="Koo H."/>
            <person name="Kravitz S."/>
            <person name="Kriventseva E.V."/>
            <person name="Kulp D."/>
            <person name="Labutti K."/>
            <person name="Lee E."/>
            <person name="Li S."/>
            <person name="Lovin D.D."/>
            <person name="Mao C."/>
            <person name="Mauceli E."/>
            <person name="Menck C.F."/>
            <person name="Miller J.R."/>
            <person name="Montgomery P."/>
            <person name="Mori A."/>
            <person name="Nascimento A.L."/>
            <person name="Naveira H.F."/>
            <person name="Nusbaum C."/>
            <person name="O'Leary S.B."/>
            <person name="Orvis J."/>
            <person name="Pertea M."/>
            <person name="Quesneville H."/>
            <person name="Reidenbach K.R."/>
            <person name="Rogers Y.-H.C."/>
            <person name="Roth C.W."/>
            <person name="Schneider J.R."/>
            <person name="Schatz M."/>
            <person name="Shumway M."/>
            <person name="Stanke M."/>
            <person name="Stinson E.O."/>
            <person name="Tubio J.M.C."/>
            <person name="Vanzee J.P."/>
            <person name="Verjovski-Almeida S."/>
            <person name="Werner D."/>
            <person name="White O.R."/>
            <person name="Wyder S."/>
            <person name="Zeng Q."/>
            <person name="Zhao Q."/>
            <person name="Zhao Y."/>
            <person name="Hill C.A."/>
            <person name="Raikhel A.S."/>
            <person name="Soares M.B."/>
            <person name="Knudson D.L."/>
            <person name="Lee N.H."/>
            <person name="Galagan J."/>
            <person name="Salzberg S.L."/>
            <person name="Paulsen I.T."/>
            <person name="Dimopoulos G."/>
            <person name="Collins F.H."/>
            <person name="Bruce B."/>
            <person name="Fraser-Liggett C.M."/>
            <person name="Severson D.W."/>
        </authorList>
    </citation>
    <scope>NUCLEOTIDE SEQUENCE [LARGE SCALE GENOMIC DNA]</scope>
    <source>
        <strain>LVPib12</strain>
    </source>
</reference>
<keyword id="KW-0010">Activator</keyword>
<keyword id="KW-0539">Nucleus</keyword>
<keyword id="KW-1185">Reference proteome</keyword>
<keyword id="KW-0804">Transcription</keyword>
<keyword id="KW-0805">Transcription regulation</keyword>
<comment type="function">
    <text evidence="1">Component of the Mediator complex, a coactivator involved in the regulated transcription of nearly all RNA polymerase II-dependent genes. Mediator functions as a bridge to convey information from gene-specific regulatory proteins to the basal RNA polymerase II transcription machinery. Mediator is recruited to promoters by direct interactions with regulatory proteins and serves as a scaffold for the assembly of a functional preinitiation complex with RNA polymerase II and the general transcription factors (By similarity).</text>
</comment>
<comment type="subunit">
    <text evidence="1">Component of the Mediator complex.</text>
</comment>
<comment type="subcellular location">
    <subcellularLocation>
        <location evidence="3">Nucleus</location>
    </subcellularLocation>
</comment>
<comment type="similarity">
    <text evidence="3">Belongs to the Mediator complex subunit 29 family.</text>
</comment>
<dbReference type="EMBL" id="CH477648">
    <property type="protein sequence ID" value="EAT37824.1"/>
    <property type="molecule type" value="Genomic_DNA"/>
</dbReference>
<dbReference type="SMR" id="Q16TJ7"/>
<dbReference type="FunCoup" id="Q16TJ7">
    <property type="interactions" value="1000"/>
</dbReference>
<dbReference type="STRING" id="7159.Q16TJ7"/>
<dbReference type="PaxDb" id="7159-AAEL010217-PB"/>
<dbReference type="EnsemblMetazoa" id="AAEL010217-RA">
    <property type="protein sequence ID" value="AAEL010217-PA"/>
    <property type="gene ID" value="AAEL010217"/>
</dbReference>
<dbReference type="GeneID" id="5573044"/>
<dbReference type="KEGG" id="aag:5573044"/>
<dbReference type="CTD" id="45881"/>
<dbReference type="VEuPathDB" id="VectorBase:AAEL010217"/>
<dbReference type="eggNOG" id="ENOG502QRNJ">
    <property type="taxonomic scope" value="Eukaryota"/>
</dbReference>
<dbReference type="HOGENOM" id="CLU_101133_0_0_1"/>
<dbReference type="InParanoid" id="Q16TJ7"/>
<dbReference type="OMA" id="NHYLPGP"/>
<dbReference type="OrthoDB" id="6366949at2759"/>
<dbReference type="PhylomeDB" id="Q16TJ7"/>
<dbReference type="Proteomes" id="UP000008820">
    <property type="component" value="Chromosome 3"/>
</dbReference>
<dbReference type="Proteomes" id="UP000682892">
    <property type="component" value="Unassembled WGS sequence"/>
</dbReference>
<dbReference type="GO" id="GO:0016592">
    <property type="term" value="C:mediator complex"/>
    <property type="evidence" value="ECO:0007669"/>
    <property type="project" value="InterPro"/>
</dbReference>
<dbReference type="GO" id="GO:0003712">
    <property type="term" value="F:transcription coregulator activity"/>
    <property type="evidence" value="ECO:0007669"/>
    <property type="project" value="TreeGrafter"/>
</dbReference>
<dbReference type="GO" id="GO:0006357">
    <property type="term" value="P:regulation of transcription by RNA polymerase II"/>
    <property type="evidence" value="ECO:0007669"/>
    <property type="project" value="TreeGrafter"/>
</dbReference>
<dbReference type="InterPro" id="IPR021018">
    <property type="entry name" value="Mediator_Med29_met"/>
</dbReference>
<dbReference type="PANTHER" id="PTHR28314">
    <property type="entry name" value="MEDIATOR OF RNA POLYMERASE II TRANSCRIPTION SUBUNIT 29"/>
    <property type="match status" value="1"/>
</dbReference>
<dbReference type="PANTHER" id="PTHR28314:SF1">
    <property type="entry name" value="MEDIATOR OF RNA POLYMERASE II TRANSCRIPTION SUBUNIT 29"/>
    <property type="match status" value="1"/>
</dbReference>
<dbReference type="Pfam" id="PF11568">
    <property type="entry name" value="Med29"/>
    <property type="match status" value="1"/>
</dbReference>
<accession>Q16TJ7</accession>
<sequence>MMNQMGMHMQQPGVVPGGPGGPVGMAGGPVGGVGVSPVMMQSPQMQQQQQVAAQQQQQQQQQQQAQAHQQQSQQTEKVDNISKVKGLVGPLRDSLSTTVKTAAQLLQQNNLNDAGTKGGDMSTTTPRFDKHLEEFYSICDQIELNLKTAKLCMQQGASSQQYLPIPVAPTQPNPAETNALSYSQYLDVVKIQIGYAKDIHDTLICAAQNICPSE</sequence>
<protein>
    <recommendedName>
        <fullName>Mediator of RNA polymerase II transcription subunit 29</fullName>
    </recommendedName>
    <alternativeName>
        <fullName>Mediator complex subunit 29</fullName>
    </alternativeName>
    <alternativeName>
        <fullName>Protein intersex</fullName>
    </alternativeName>
</protein>
<name>MED29_AEDAE</name>
<proteinExistence type="inferred from homology"/>
<organism>
    <name type="scientific">Aedes aegypti</name>
    <name type="common">Yellowfever mosquito</name>
    <name type="synonym">Culex aegypti</name>
    <dbReference type="NCBI Taxonomy" id="7159"/>
    <lineage>
        <taxon>Eukaryota</taxon>
        <taxon>Metazoa</taxon>
        <taxon>Ecdysozoa</taxon>
        <taxon>Arthropoda</taxon>
        <taxon>Hexapoda</taxon>
        <taxon>Insecta</taxon>
        <taxon>Pterygota</taxon>
        <taxon>Neoptera</taxon>
        <taxon>Endopterygota</taxon>
        <taxon>Diptera</taxon>
        <taxon>Nematocera</taxon>
        <taxon>Culicoidea</taxon>
        <taxon>Culicidae</taxon>
        <taxon>Culicinae</taxon>
        <taxon>Aedini</taxon>
        <taxon>Aedes</taxon>
        <taxon>Stegomyia</taxon>
    </lineage>
</organism>
<feature type="chain" id="PRO_0000305700" description="Mediator of RNA polymerase II transcription subunit 29">
    <location>
        <begin position="1"/>
        <end position="214"/>
    </location>
</feature>
<feature type="region of interest" description="Disordered" evidence="2">
    <location>
        <begin position="1"/>
        <end position="78"/>
    </location>
</feature>
<feature type="compositionally biased region" description="Gly residues" evidence="2">
    <location>
        <begin position="15"/>
        <end position="34"/>
    </location>
</feature>
<feature type="compositionally biased region" description="Low complexity" evidence="2">
    <location>
        <begin position="44"/>
        <end position="74"/>
    </location>
</feature>